<name>PFKA1_YEAST</name>
<comment type="function">
    <text evidence="2 3 6 12 13 14 15 17 18">Catalyzes the phosphorylation of D-fructose 6-phosphate to fructose 1,6-bisphosphate by ATP, the first committing step of glycolysis.</text>
</comment>
<comment type="catalytic activity">
    <reaction evidence="2 15">
        <text>beta-D-fructose 6-phosphate + ATP = beta-D-fructose 1,6-bisphosphate + ADP + H(+)</text>
        <dbReference type="Rhea" id="RHEA:16109"/>
        <dbReference type="ChEBI" id="CHEBI:15378"/>
        <dbReference type="ChEBI" id="CHEBI:30616"/>
        <dbReference type="ChEBI" id="CHEBI:32966"/>
        <dbReference type="ChEBI" id="CHEBI:57634"/>
        <dbReference type="ChEBI" id="CHEBI:456216"/>
        <dbReference type="EC" id="2.7.1.11"/>
    </reaction>
</comment>
<comment type="cofactor">
    <cofactor evidence="1 2">
        <name>Mg(2+)</name>
        <dbReference type="ChEBI" id="CHEBI:18420"/>
    </cofactor>
</comment>
<comment type="activity regulation">
    <text evidence="2 9 15 16">Allosterically activated by ADP, AMP, or fructose 2,6-bisphosphate, and allosterically inhibited by ATP or citrate.</text>
</comment>
<comment type="biophysicochemical properties">
    <kinetics>
        <KM evidence="15">0.24 mM for ATP (without effector)</KM>
        <KM evidence="15">0.3 mM for ATP (with 1 mM AMP)</KM>
        <KM evidence="15">0.31 mM for ATP (with 20 uM fructose 2,6-bisphosphate)</KM>
        <KM evidence="15">1.65 mM for fructose 6-phosphate (without effector)</KM>
        <KM evidence="15">0.51 mM for fructose 6-phosphate (with 1 mM AMP)</KM>
        <KM evidence="15">0.11 mM for fructose 6-phosphate (with 20 uM fructose 2,6-bisphosphate)</KM>
    </kinetics>
</comment>
<comment type="pathway">
    <text evidence="2">Carbohydrate degradation; glycolysis; D-glyceraldehyde 3-phosphate and glycerone phosphate from D-glucose: step 3/4.</text>
</comment>
<comment type="subunit">
    <text evidence="2 5 10 11">Heterooctamer of 4 alpha and 4 beta chains.</text>
</comment>
<comment type="interaction">
    <interactant intactId="EBI-9428">
        <id>P16861</id>
    </interactant>
    <interactant intactId="EBI-9435">
        <id>P16862</id>
        <label>PFK2</label>
    </interactant>
    <organismsDiffer>false</organismsDiffer>
    <experiments>8</experiments>
</comment>
<comment type="subcellular location">
    <subcellularLocation>
        <location evidence="2 8">Cytoplasm</location>
    </subcellularLocation>
    <subcellularLocation>
        <location>Mitochondrion outer membrane</location>
        <topology>Peripheral membrane protein</topology>
        <orientation evidence="7">Cytoplasmic side</orientation>
    </subcellularLocation>
</comment>
<comment type="miscellaneous">
    <text evidence="4">Present with 89800 molecules/cell in log phase SD medium.</text>
</comment>
<comment type="similarity">
    <text evidence="2">Belongs to the phosphofructokinase type A (PFKA) family. ATP-dependent PFK group I subfamily. Eukaryotic two domain clade 'E' sub-subfamily.</text>
</comment>
<sequence length="987" mass="107970">MQSQDSCYGVAFRSIITNDEALFKKTIHFYHTLGFATVKDFNKFKHGENSLLSSGTSQDSLREVWLESFKLSEVDASGFRIPQQEATNKAQSQGALLKIRLVMSAPIDETFDTNETATITYFSTDLNKIVEKFPKQAEKLSDTLVFLKDPMGNNITFSGLANATDSAPTSKDAFLEATSEDEIISRASSDASDLLRQTLGSSQKKKKIAVMTSGGDSPGMNAAVRAVVRTGIHFGCDVFAVYEGYEGLLRGGKYLKKMAWEDVRGWLSEGGTLIGTARSMEFRKREGRRQAAGNLISQGIDALVVCGGDGSLTGADLFRHEWPSLVDELVAEGRFTKEEVAPYKNLSIVGLVGSIDNDMSGTDSTIGAYSALERICEMVDYIDATAKSHSRAFVVEVMGRHCGWLALMAGIATGADYIFIPERAVPHGKWQDELKEVCQRHRSKGRRNNTIIVAEGALDDQLNPVTANDVKDALIELGLDTKVTILGHVQRGGTAVAHDRWLATLQGVDAVKAVLEFTPETPSPLIGILENKIIRMPLVESVKLTKSVATAIENKDFDKAISLRDTEFIELYENFLSTTVKDDGSELLPVSDRLNIGIVHVGAPSAALNAATRAATLYCLSHGHKPYAIMNGFSGLIQTGEVKELSWIDVENWHNLGGSEIGTNRSVASEDLGTIAYYFQKNKLDGLIILGGFEGFRSLKQLRDGRTQHPIFNIPMCLIPATVSNNVPGTEYSLGVDTCLNALVNYTDDIKQSASATRRRVFVCEVQGGHSGYIASFTGLITGAVSVYTPEKKIDLASIREDITLLKENFRHDKGENRNGKLLVRNEQASSVYSTQLLADIISEASKGKFGVRTAIPGHVQQGGVPSSKDRVTASRFAVKCIKFIEQWNKKNEASPNTDAKVLRFKFDTHGEKVPTVEHEDDSAAVICVNGSHVSFKPIANLWENETNVELRKGFEVHWAEYNKIGDILSGRLKLRAEVAALAAENK</sequence>
<dbReference type="EC" id="2.7.1.11" evidence="2"/>
<dbReference type="EMBL" id="M26943">
    <property type="protein sequence ID" value="AAA34859.1"/>
    <property type="molecule type" value="Genomic_DNA"/>
</dbReference>
<dbReference type="EMBL" id="Z73025">
    <property type="protein sequence ID" value="CAA97268.1"/>
    <property type="molecule type" value="Genomic_DNA"/>
</dbReference>
<dbReference type="EMBL" id="X87941">
    <property type="protein sequence ID" value="CAA61193.1"/>
    <property type="molecule type" value="Genomic_DNA"/>
</dbReference>
<dbReference type="EMBL" id="BK006941">
    <property type="protein sequence ID" value="DAA08331.1"/>
    <property type="molecule type" value="Genomic_DNA"/>
</dbReference>
<dbReference type="PIR" id="JQ0016">
    <property type="entry name" value="JQ0016"/>
</dbReference>
<dbReference type="RefSeq" id="NP_011756.1">
    <property type="nucleotide sequence ID" value="NM_001181369.1"/>
</dbReference>
<dbReference type="PDB" id="3O8O">
    <property type="method" value="X-ray"/>
    <property type="resolution" value="2.90 A"/>
    <property type="chains" value="A/C/E/G=201-987"/>
</dbReference>
<dbReference type="PDBsum" id="3O8O"/>
<dbReference type="SMR" id="P16861"/>
<dbReference type="BioGRID" id="33492">
    <property type="interactions" value="318"/>
</dbReference>
<dbReference type="ComplexPortal" id="CPX-554">
    <property type="entry name" value="6-phosphofructokinase complex"/>
</dbReference>
<dbReference type="DIP" id="DIP-1505N"/>
<dbReference type="FunCoup" id="P16861">
    <property type="interactions" value="1131"/>
</dbReference>
<dbReference type="IntAct" id="P16861">
    <property type="interactions" value="80"/>
</dbReference>
<dbReference type="MINT" id="P16861"/>
<dbReference type="STRING" id="4932.YGR240C"/>
<dbReference type="iPTMnet" id="P16861"/>
<dbReference type="PaxDb" id="4932-YGR240C"/>
<dbReference type="PeptideAtlas" id="P16861"/>
<dbReference type="EnsemblFungi" id="YGR240C_mRNA">
    <property type="protein sequence ID" value="YGR240C"/>
    <property type="gene ID" value="YGR240C"/>
</dbReference>
<dbReference type="GeneID" id="853155"/>
<dbReference type="KEGG" id="sce:YGR240C"/>
<dbReference type="AGR" id="SGD:S000003472"/>
<dbReference type="SGD" id="S000003472">
    <property type="gene designation" value="PFK1"/>
</dbReference>
<dbReference type="VEuPathDB" id="FungiDB:YGR240C"/>
<dbReference type="eggNOG" id="KOG2440">
    <property type="taxonomic scope" value="Eukaryota"/>
</dbReference>
<dbReference type="HOGENOM" id="CLU_011053_0_0_1"/>
<dbReference type="InParanoid" id="P16861"/>
<dbReference type="OMA" id="WHNLGGS"/>
<dbReference type="OrthoDB" id="537915at2759"/>
<dbReference type="BioCyc" id="MetaCyc:YGR240C-MONOMER"/>
<dbReference type="BioCyc" id="YEAST:YGR240C-MONOMER"/>
<dbReference type="Reactome" id="R-SCE-6798695">
    <property type="pathway name" value="Neutrophil degranulation"/>
</dbReference>
<dbReference type="Reactome" id="R-SCE-70171">
    <property type="pathway name" value="Glycolysis"/>
</dbReference>
<dbReference type="SABIO-RK" id="P16861"/>
<dbReference type="UniPathway" id="UPA00109">
    <property type="reaction ID" value="UER00182"/>
</dbReference>
<dbReference type="BioGRID-ORCS" id="853155">
    <property type="hits" value="4 hits in 10 CRISPR screens"/>
</dbReference>
<dbReference type="CD-CODE" id="0F56F502">
    <property type="entry name" value="G-body"/>
</dbReference>
<dbReference type="CD-CODE" id="E03F929F">
    <property type="entry name" value="Stress granule"/>
</dbReference>
<dbReference type="EvolutionaryTrace" id="P16861"/>
<dbReference type="PRO" id="PR:P16861"/>
<dbReference type="Proteomes" id="UP000002311">
    <property type="component" value="Chromosome VII"/>
</dbReference>
<dbReference type="RNAct" id="P16861">
    <property type="molecule type" value="protein"/>
</dbReference>
<dbReference type="GO" id="GO:0005945">
    <property type="term" value="C:6-phosphofructokinase complex"/>
    <property type="evidence" value="ECO:0000314"/>
    <property type="project" value="SGD"/>
</dbReference>
<dbReference type="GO" id="GO:0005737">
    <property type="term" value="C:cytoplasm"/>
    <property type="evidence" value="ECO:0007005"/>
    <property type="project" value="SGD"/>
</dbReference>
<dbReference type="GO" id="GO:0005741">
    <property type="term" value="C:mitochondrial outer membrane"/>
    <property type="evidence" value="ECO:0007669"/>
    <property type="project" value="UniProtKB-SubCell"/>
</dbReference>
<dbReference type="GO" id="GO:0005739">
    <property type="term" value="C:mitochondrion"/>
    <property type="evidence" value="ECO:0000314"/>
    <property type="project" value="SGD"/>
</dbReference>
<dbReference type="GO" id="GO:0003872">
    <property type="term" value="F:6-phosphofructokinase activity"/>
    <property type="evidence" value="ECO:0007669"/>
    <property type="project" value="UniProtKB-UniRule"/>
</dbReference>
<dbReference type="GO" id="GO:0005524">
    <property type="term" value="F:ATP binding"/>
    <property type="evidence" value="ECO:0007669"/>
    <property type="project" value="UniProtKB-KW"/>
</dbReference>
<dbReference type="GO" id="GO:0070095">
    <property type="term" value="F:fructose-6-phosphate binding"/>
    <property type="evidence" value="ECO:0000318"/>
    <property type="project" value="GO_Central"/>
</dbReference>
<dbReference type="GO" id="GO:0046872">
    <property type="term" value="F:metal ion binding"/>
    <property type="evidence" value="ECO:0007669"/>
    <property type="project" value="UniProtKB-KW"/>
</dbReference>
<dbReference type="GO" id="GO:0061621">
    <property type="term" value="P:canonical glycolysis"/>
    <property type="evidence" value="ECO:0000318"/>
    <property type="project" value="GO_Central"/>
</dbReference>
<dbReference type="GO" id="GO:0030388">
    <property type="term" value="P:fructose 1,6-bisphosphate metabolic process"/>
    <property type="evidence" value="ECO:0000318"/>
    <property type="project" value="GO_Central"/>
</dbReference>
<dbReference type="GO" id="GO:0006002">
    <property type="term" value="P:fructose 6-phosphate metabolic process"/>
    <property type="evidence" value="ECO:0000314"/>
    <property type="project" value="ComplexPortal"/>
</dbReference>
<dbReference type="GO" id="GO:0006096">
    <property type="term" value="P:glycolytic process"/>
    <property type="evidence" value="ECO:0000314"/>
    <property type="project" value="SGD"/>
</dbReference>
<dbReference type="GO" id="GO:1902600">
    <property type="term" value="P:proton transmembrane transport"/>
    <property type="evidence" value="ECO:0000316"/>
    <property type="project" value="UniProtKB"/>
</dbReference>
<dbReference type="GO" id="GO:0051453">
    <property type="term" value="P:regulation of intracellular pH"/>
    <property type="evidence" value="ECO:0000315"/>
    <property type="project" value="SGD"/>
</dbReference>
<dbReference type="FunFam" id="3.10.180.90:FF:000001">
    <property type="entry name" value="ATP-dependent 6-phosphofructokinase"/>
    <property type="match status" value="1"/>
</dbReference>
<dbReference type="FunFam" id="3.40.50.450:FF:000010">
    <property type="entry name" value="ATP-dependent 6-phosphofructokinase"/>
    <property type="match status" value="1"/>
</dbReference>
<dbReference type="FunFam" id="3.40.50.460:FF:000007">
    <property type="entry name" value="ATP-dependent 6-phosphofructokinase"/>
    <property type="match status" value="1"/>
</dbReference>
<dbReference type="FunFam" id="3.40.50.460:FF:000008">
    <property type="entry name" value="ATP-dependent 6-phosphofructokinase"/>
    <property type="match status" value="1"/>
</dbReference>
<dbReference type="Gene3D" id="3.10.180.90">
    <property type="match status" value="1"/>
</dbReference>
<dbReference type="Gene3D" id="3.40.50.450">
    <property type="match status" value="2"/>
</dbReference>
<dbReference type="Gene3D" id="3.40.50.460">
    <property type="entry name" value="Phosphofructokinase domain"/>
    <property type="match status" value="2"/>
</dbReference>
<dbReference type="HAMAP" id="MF_03184">
    <property type="entry name" value="Phosphofructokinase_I_E"/>
    <property type="match status" value="1"/>
</dbReference>
<dbReference type="InterPro" id="IPR009161">
    <property type="entry name" value="6-Pfructokinase_euk"/>
</dbReference>
<dbReference type="InterPro" id="IPR022953">
    <property type="entry name" value="ATP_PFK"/>
</dbReference>
<dbReference type="InterPro" id="IPR040712">
    <property type="entry name" value="Pfk_N"/>
</dbReference>
<dbReference type="InterPro" id="IPR015912">
    <property type="entry name" value="Phosphofructokinase_CS"/>
</dbReference>
<dbReference type="InterPro" id="IPR000023">
    <property type="entry name" value="Phosphofructokinase_dom"/>
</dbReference>
<dbReference type="InterPro" id="IPR035966">
    <property type="entry name" value="PKF_sf"/>
</dbReference>
<dbReference type="NCBIfam" id="TIGR02478">
    <property type="entry name" value="6PF1K_euk"/>
    <property type="match status" value="1"/>
</dbReference>
<dbReference type="PANTHER" id="PTHR13697:SF57">
    <property type="entry name" value="ATP-DEPENDENT 6-PHOSPHOFRUCTOKINASE SUBUNIT ALPHA"/>
    <property type="match status" value="1"/>
</dbReference>
<dbReference type="PANTHER" id="PTHR13697">
    <property type="entry name" value="PHOSPHOFRUCTOKINASE"/>
    <property type="match status" value="1"/>
</dbReference>
<dbReference type="Pfam" id="PF00365">
    <property type="entry name" value="PFK"/>
    <property type="match status" value="2"/>
</dbReference>
<dbReference type="Pfam" id="PF18468">
    <property type="entry name" value="Pfk_N"/>
    <property type="match status" value="1"/>
</dbReference>
<dbReference type="PIRSF" id="PIRSF000533">
    <property type="entry name" value="ATP_PFK_euk"/>
    <property type="match status" value="1"/>
</dbReference>
<dbReference type="PRINTS" id="PR00476">
    <property type="entry name" value="PHFRCTKINASE"/>
</dbReference>
<dbReference type="SUPFAM" id="SSF53784">
    <property type="entry name" value="Phosphofructokinase"/>
    <property type="match status" value="2"/>
</dbReference>
<dbReference type="PROSITE" id="PS00433">
    <property type="entry name" value="PHOSPHOFRUCTOKINASE"/>
    <property type="match status" value="2"/>
</dbReference>
<reference key="1">
    <citation type="journal article" date="1989" name="Gene">
        <title>The phosphofructokinase genes of yeast evolved from two duplication events.</title>
        <authorList>
            <person name="Heinisch J.J."/>
            <person name="Ritzel R.G."/>
            <person name="von Borstel R.C."/>
            <person name="Aguilera A."/>
            <person name="Rodicio R."/>
            <person name="Zimmermann F.K."/>
        </authorList>
    </citation>
    <scope>NUCLEOTIDE SEQUENCE [GENOMIC DNA]</scope>
</reference>
<reference key="2">
    <citation type="journal article" date="1997" name="Yeast">
        <title>Sequencing of a 9.9 kb segment on the right arm of yeast chromosome VII reveals four open reading frames, including PFK1, the gene coding for succinyl-CoA synthetase (beta-chain) and two ORFs sharing homology with ORFs of the yeast chromosome VIII.</title>
        <authorList>
            <person name="Guerreiro P."/>
            <person name="Azevedo D."/>
            <person name="Barreiros T."/>
            <person name="Rodrigues-Pousada C."/>
        </authorList>
    </citation>
    <scope>NUCLEOTIDE SEQUENCE [GENOMIC DNA]</scope>
    <source>
        <strain>ATCC 204508 / S288c</strain>
    </source>
</reference>
<reference key="3">
    <citation type="journal article" date="1997" name="Nature">
        <title>The nucleotide sequence of Saccharomyces cerevisiae chromosome VII.</title>
        <authorList>
            <person name="Tettelin H."/>
            <person name="Agostoni-Carbone M.L."/>
            <person name="Albermann K."/>
            <person name="Albers M."/>
            <person name="Arroyo J."/>
            <person name="Backes U."/>
            <person name="Barreiros T."/>
            <person name="Bertani I."/>
            <person name="Bjourson A.J."/>
            <person name="Brueckner M."/>
            <person name="Bruschi C.V."/>
            <person name="Carignani G."/>
            <person name="Castagnoli L."/>
            <person name="Cerdan E."/>
            <person name="Clemente M.L."/>
            <person name="Coblenz A."/>
            <person name="Coglievina M."/>
            <person name="Coissac E."/>
            <person name="Defoor E."/>
            <person name="Del Bino S."/>
            <person name="Delius H."/>
            <person name="Delneri D."/>
            <person name="de Wergifosse P."/>
            <person name="Dujon B."/>
            <person name="Durand P."/>
            <person name="Entian K.-D."/>
            <person name="Eraso P."/>
            <person name="Escribano V."/>
            <person name="Fabiani L."/>
            <person name="Fartmann B."/>
            <person name="Feroli F."/>
            <person name="Feuermann M."/>
            <person name="Frontali L."/>
            <person name="Garcia-Gonzalez M."/>
            <person name="Garcia-Saez M.I."/>
            <person name="Goffeau A."/>
            <person name="Guerreiro P."/>
            <person name="Hani J."/>
            <person name="Hansen M."/>
            <person name="Hebling U."/>
            <person name="Hernandez K."/>
            <person name="Heumann K."/>
            <person name="Hilger F."/>
            <person name="Hofmann B."/>
            <person name="Indge K.J."/>
            <person name="James C.M."/>
            <person name="Klima R."/>
            <person name="Koetter P."/>
            <person name="Kramer B."/>
            <person name="Kramer W."/>
            <person name="Lauquin G."/>
            <person name="Leuther H."/>
            <person name="Louis E.J."/>
            <person name="Maillier E."/>
            <person name="Marconi A."/>
            <person name="Martegani E."/>
            <person name="Mazon M.J."/>
            <person name="Mazzoni C."/>
            <person name="McReynolds A.D.K."/>
            <person name="Melchioretto P."/>
            <person name="Mewes H.-W."/>
            <person name="Minenkova O."/>
            <person name="Mueller-Auer S."/>
            <person name="Nawrocki A."/>
            <person name="Netter P."/>
            <person name="Neu R."/>
            <person name="Nombela C."/>
            <person name="Oliver S.G."/>
            <person name="Panzeri L."/>
            <person name="Paoluzi S."/>
            <person name="Plevani P."/>
            <person name="Portetelle D."/>
            <person name="Portillo F."/>
            <person name="Potier S."/>
            <person name="Purnelle B."/>
            <person name="Rieger M."/>
            <person name="Riles L."/>
            <person name="Rinaldi T."/>
            <person name="Robben J."/>
            <person name="Rodrigues-Pousada C."/>
            <person name="Rodriguez-Belmonte E."/>
            <person name="Rodriguez-Torres A.M."/>
            <person name="Rose M."/>
            <person name="Ruzzi M."/>
            <person name="Saliola M."/>
            <person name="Sanchez-Perez M."/>
            <person name="Schaefer B."/>
            <person name="Schaefer M."/>
            <person name="Scharfe M."/>
            <person name="Schmidheini T."/>
            <person name="Schreer A."/>
            <person name="Skala J."/>
            <person name="Souciet J.-L."/>
            <person name="Steensma H.Y."/>
            <person name="Talla E."/>
            <person name="Thierry A."/>
            <person name="Vandenbol M."/>
            <person name="van der Aart Q.J.M."/>
            <person name="Van Dyck L."/>
            <person name="Vanoni M."/>
            <person name="Verhasselt P."/>
            <person name="Voet M."/>
            <person name="Volckaert G."/>
            <person name="Wambutt R."/>
            <person name="Watson M.D."/>
            <person name="Weber N."/>
            <person name="Wedler E."/>
            <person name="Wedler H."/>
            <person name="Wipfli P."/>
            <person name="Wolf K."/>
            <person name="Wright L.F."/>
            <person name="Zaccaria P."/>
            <person name="Zimmermann M."/>
            <person name="Zollner A."/>
            <person name="Kleine K."/>
        </authorList>
    </citation>
    <scope>NUCLEOTIDE SEQUENCE [LARGE SCALE GENOMIC DNA]</scope>
    <source>
        <strain>ATCC 204508 / S288c</strain>
    </source>
</reference>
<reference key="4">
    <citation type="journal article" date="2014" name="G3 (Bethesda)">
        <title>The reference genome sequence of Saccharomyces cerevisiae: Then and now.</title>
        <authorList>
            <person name="Engel S.R."/>
            <person name="Dietrich F.S."/>
            <person name="Fisk D.G."/>
            <person name="Binkley G."/>
            <person name="Balakrishnan R."/>
            <person name="Costanzo M.C."/>
            <person name="Dwight S.S."/>
            <person name="Hitz B.C."/>
            <person name="Karra K."/>
            <person name="Nash R.S."/>
            <person name="Weng S."/>
            <person name="Wong E.D."/>
            <person name="Lloyd P."/>
            <person name="Skrzypek M.S."/>
            <person name="Miyasato S.R."/>
            <person name="Simison M."/>
            <person name="Cherry J.M."/>
        </authorList>
    </citation>
    <scope>GENOME REANNOTATION</scope>
    <source>
        <strain>ATCC 204508 / S288c</strain>
    </source>
</reference>
<reference key="5">
    <citation type="journal article" date="1996" name="Yeast">
        <title>Sequence analysis of the 43 kb CRM1-YLM9-PET54-DIE2-SMI1-PHO81-YHB4-PFK1 region from the right arm of Saccharomyces cerevisiae chromosome VII.</title>
        <authorList>
            <person name="van der Aart Q.J.M."/>
            <person name="Kleine K."/>
            <person name="Steensma H.Y."/>
        </authorList>
    </citation>
    <scope>NUCLEOTIDE SEQUENCE [GENOMIC DNA] OF 794-987</scope>
    <source>
        <strain>ATCC 204508 / S288c</strain>
    </source>
</reference>
<reference key="6">
    <citation type="journal article" date="1993" name="Eur. J. Biochem.">
        <title>Limited proteolysis of yeast phosphofructokinase. Sequence locations of cleavage sites created by the actions of different proteinases.</title>
        <authorList>
            <person name="Kopperschlaeger G."/>
            <person name="Baer J."/>
            <person name="Stellwagen E."/>
        </authorList>
    </citation>
    <scope>PROTEIN SEQUENCE OF 1-6; 90-97; 197-205 AND 914-921</scope>
</reference>
<reference key="7">
    <citation type="journal article" date="1977" name="Eur. J. Biochem.">
        <title>Physicochemical parameters and subunit composition of yeast phosphofructokinase.</title>
        <authorList>
            <person name="Kopperschlaeger G."/>
            <person name="Baer J."/>
            <person name="Nissler K."/>
            <person name="Hofmann E."/>
        </authorList>
    </citation>
    <scope>SUBUNIT</scope>
</reference>
<reference key="8">
    <citation type="journal article" date="1977" name="J. Biol. Chem.">
        <title>Activation by phosphate of yeast phosphofructokinase.</title>
        <authorList>
            <person name="Banuelos M."/>
            <person name="Gancedo C."/>
            <person name="Gancedo J.M."/>
        </authorList>
    </citation>
    <scope>ACTIVITY REGULATION</scope>
</reference>
<reference key="9">
    <citation type="journal article" date="1978" name="Genetics">
        <title>Glycolysis mutants in Saccharomyces cerevisiae.</title>
        <authorList>
            <person name="Clifton D."/>
            <person name="Weinstock S.B."/>
            <person name="Fraenkel D.G."/>
        </authorList>
    </citation>
    <scope>FUNCTION</scope>
</reference>
<reference key="10">
    <citation type="journal article" date="1981" name="Biochem. Biophys. Res. Commun.">
        <title>Stimulation of yeast phosphofructokinase activity by fructose 2,6-bisphosphate.</title>
        <authorList>
            <person name="Avigad G."/>
        </authorList>
    </citation>
    <scope>ACTIVITY REGULATION</scope>
</reference>
<reference key="11">
    <citation type="journal article" date="1982" name="Biochemistry">
        <title>Mutant studies of yeast phosphofructokinase.</title>
        <authorList>
            <person name="Clifton D."/>
            <person name="Fraenkel D.G."/>
        </authorList>
    </citation>
    <scope>FUNCTION</scope>
</reference>
<reference key="12">
    <citation type="journal article" date="1983" name="Biochem. Biophys. Res. Commun.">
        <title>Similarity of activation of yeast phosphofructokinase by AMP and fructose-2,6-bisphosphate.</title>
        <authorList>
            <person name="Nissler K."/>
            <person name="Otto A."/>
            <person name="Schellenberger W."/>
            <person name="Hofmann E."/>
        </authorList>
    </citation>
    <scope>FUNCTION</scope>
    <scope>CATALYTIC ACTIVITY</scope>
    <scope>BIOPHYSICOCHEMICAL PROPERTIES</scope>
    <scope>ACTIVITY REGULATION</scope>
</reference>
<reference key="13">
    <citation type="journal article" date="1985" name="Adv. Enzyme Regul.">
        <title>Temporal organization of the phosphofructokinase/fructose-1,6-biphosphatase cycle.</title>
        <authorList>
            <person name="Hofmann E."/>
            <person name="Eschrich K."/>
            <person name="Schellenberger W."/>
        </authorList>
    </citation>
    <scope>FUNCTION</scope>
</reference>
<reference key="14">
    <citation type="journal article" date="1985" name="Biomed. Biochim. Acta">
        <title>An electron microscopy study of the quarternary structure of yeast phosphofructokinase.</title>
        <authorList>
            <person name="Nissler K."/>
            <person name="Hofmann E."/>
            <person name="Stel'maschchuk V."/>
            <person name="Orlova E."/>
            <person name="Kiselev N."/>
        </authorList>
    </citation>
    <scope>SUBUNIT</scope>
</reference>
<reference key="15">
    <citation type="journal article" date="1986" name="Mol. Gen. Genet.">
        <title>Isolation and characterization of the two structural genes coding for phosphofructokinase in yeast.</title>
        <authorList>
            <person name="Heinisch J."/>
        </authorList>
    </citation>
    <scope>FUNCTION</scope>
</reference>
<reference key="16">
    <citation type="journal article" date="1994" name="J. Biol. Chem.">
        <title>Studies on the function of yeast phosphofructokinase subunits by in vitro mutagenesis.</title>
        <authorList>
            <person name="Arvanitidis A."/>
            <person name="Heinisch J.J."/>
        </authorList>
    </citation>
    <scope>FUNCTION</scope>
    <scope>MUTAGENESIS OF ASP-309; ASP-356; ARG-447 AND HIS-488</scope>
</reference>
<reference key="17">
    <citation type="journal article" date="1996" name="J. Biol. Chem.">
        <title>A yeast phosphofructokinase insensitive to the Fructose 2,6-bisphosphate; allosteric activator. Glycolysis/metabolic regulation/allosteric control.</title>
        <authorList>
            <person name="Heinisch J.J."/>
            <person name="Boles E."/>
            <person name="Timpel C."/>
        </authorList>
    </citation>
    <scope>FUNCTION</scope>
    <scope>MUTAGENESIS OF SER-724 AND HIS-859</scope>
</reference>
<reference key="18">
    <citation type="journal article" date="2000" name="J. Biol. Chem.">
        <title>Single point mutations in either gene encoding the subunits of the heterooctameric yeast phosphofructokinase abolish allosteric inhibition by ATP.</title>
        <authorList>
            <person name="Rodicio R."/>
            <person name="Strauss A."/>
            <person name="Heinisch J.J."/>
        </authorList>
    </citation>
    <scope>FUNCTION</scope>
    <scope>MUTAGENESIS OF PRO-728</scope>
</reference>
<reference key="19">
    <citation type="journal article" date="2003" name="Nature">
        <title>Global analysis of protein expression in yeast.</title>
        <authorList>
            <person name="Ghaemmaghami S."/>
            <person name="Huh W.-K."/>
            <person name="Bower K."/>
            <person name="Howson R.W."/>
            <person name="Belle A."/>
            <person name="Dephoure N."/>
            <person name="O'Shea E.K."/>
            <person name="Weissman J.S."/>
        </authorList>
    </citation>
    <scope>LEVEL OF PROTEIN EXPRESSION [LARGE SCALE ANALYSIS]</scope>
</reference>
<reference key="20">
    <citation type="journal article" date="2005" name="Mol. Cell. Proteomics">
        <title>Quantitative phosphoproteomics applied to the yeast pheromone signaling pathway.</title>
        <authorList>
            <person name="Gruhler A."/>
            <person name="Olsen J.V."/>
            <person name="Mohammed S."/>
            <person name="Mortensen P."/>
            <person name="Faergeman N.J."/>
            <person name="Mann M."/>
            <person name="Jensen O.N."/>
        </authorList>
    </citation>
    <scope>IDENTIFICATION BY MASS SPECTROMETRY [LARGE SCALE ANALYSIS]</scope>
    <source>
        <strain>YAL6B</strain>
    </source>
</reference>
<reference key="21">
    <citation type="journal article" date="2006" name="Biochim. Biophys. Acta">
        <title>Enolase takes part in a macromolecular complex associated to mitochondria in yeast.</title>
        <authorList>
            <person name="Brandina I."/>
            <person name="Graham J."/>
            <person name="Lemaitre-Guillier C."/>
            <person name="Entelis N."/>
            <person name="Krasheninnikov I."/>
            <person name="Sweetlove L."/>
            <person name="Tarassov I."/>
            <person name="Martin R.P."/>
        </authorList>
    </citation>
    <scope>SUBCELLULAR LOCATION</scope>
</reference>
<reference key="22">
    <citation type="journal article" date="2007" name="J. Proteome Res.">
        <title>Large-scale phosphorylation analysis of alpha-factor-arrested Saccharomyces cerevisiae.</title>
        <authorList>
            <person name="Li X."/>
            <person name="Gerber S.A."/>
            <person name="Rudner A.D."/>
            <person name="Beausoleil S.A."/>
            <person name="Haas W."/>
            <person name="Villen J."/>
            <person name="Elias J.E."/>
            <person name="Gygi S.P."/>
        </authorList>
    </citation>
    <scope>PHOSPHORYLATION [LARGE SCALE ANALYSIS] AT SER-179; SER-185 AND SER-192</scope>
    <scope>IDENTIFICATION BY MASS SPECTROMETRY [LARGE SCALE ANALYSIS]</scope>
    <source>
        <strain>ADR376</strain>
    </source>
</reference>
<reference key="23">
    <citation type="journal article" date="2008" name="Fungal Genet. Biol.">
        <title>Detection and localisation of protein-protein interactions in Saccharomyces cerevisiae using a split-GFP method.</title>
        <authorList>
            <person name="Barnard E."/>
            <person name="McFerran N.V."/>
            <person name="Trudgett A."/>
            <person name="Nelson J."/>
            <person name="Timson D.J."/>
        </authorList>
    </citation>
    <scope>SUBCELLULAR LOCATION</scope>
</reference>
<reference key="24">
    <citation type="journal article" date="2008" name="Mol. Cell. Proteomics">
        <title>A multidimensional chromatography technology for in-depth phosphoproteome analysis.</title>
        <authorList>
            <person name="Albuquerque C.P."/>
            <person name="Smolka M.B."/>
            <person name="Payne S.H."/>
            <person name="Bafna V."/>
            <person name="Eng J."/>
            <person name="Zhou H."/>
        </authorList>
    </citation>
    <scope>PHOSPHORYLATION [LARGE SCALE ANALYSIS] AT SER-3; SER-185 AND SER-192</scope>
    <scope>IDENTIFICATION BY MASS SPECTROMETRY [LARGE SCALE ANALYSIS]</scope>
</reference>
<reference key="25">
    <citation type="journal article" date="2009" name="Science">
        <title>Global analysis of Cdk1 substrate phosphorylation sites provides insights into evolution.</title>
        <authorList>
            <person name="Holt L.J."/>
            <person name="Tuch B.B."/>
            <person name="Villen J."/>
            <person name="Johnson A.D."/>
            <person name="Gygi S.P."/>
            <person name="Morgan D.O."/>
        </authorList>
    </citation>
    <scope>PHOSPHORYLATION [LARGE SCALE ANALYSIS] AT SER-166; SER-179; SER-185; SER-189; SER-192; SER-217 AND THR-450</scope>
    <scope>IDENTIFICATION BY MASS SPECTROMETRY [LARGE SCALE ANALYSIS]</scope>
</reference>
<reference key="26">
    <citation type="journal article" date="2012" name="Proc. Natl. Acad. Sci. U.S.A.">
        <title>N-terminal acetylome analyses and functional insights of the N-terminal acetyltransferase NatB.</title>
        <authorList>
            <person name="Van Damme P."/>
            <person name="Lasa M."/>
            <person name="Polevoda B."/>
            <person name="Gazquez C."/>
            <person name="Elosegui-Artola A."/>
            <person name="Kim D.S."/>
            <person name="De Juan-Pardo E."/>
            <person name="Demeyer K."/>
            <person name="Hole K."/>
            <person name="Larrea E."/>
            <person name="Timmerman E."/>
            <person name="Prieto J."/>
            <person name="Arnesen T."/>
            <person name="Sherman F."/>
            <person name="Gevaert K."/>
            <person name="Aldabe R."/>
        </authorList>
    </citation>
    <scope>IDENTIFICATION BY MASS SPECTROMETRY [LARGE SCALE ANALYSIS]</scope>
</reference>
<reference key="27">
    <citation type="journal article" date="2012" name="Proteomics">
        <title>Sites of ubiquitin attachment in Saccharomyces cerevisiae.</title>
        <authorList>
            <person name="Starita L.M."/>
            <person name="Lo R.S."/>
            <person name="Eng J.K."/>
            <person name="von Haller P.D."/>
            <person name="Fields S."/>
        </authorList>
    </citation>
    <scope>UBIQUITINATION [LARGE SCALE ANALYSIS] AT LYS-89 AND LYS-625</scope>
    <scope>IDENTIFICATION BY MASS SPECTROMETRY [LARGE SCALE ANALYSIS]</scope>
</reference>
<reference key="28">
    <citation type="journal article" date="2011" name="J. Mol. Biol.">
        <title>The crystal structures of eukaryotic phosphofructokinases from baker's yeast and rabbit skeletal muscle.</title>
        <authorList>
            <person name="Banaszak K."/>
            <person name="Mechin I."/>
            <person name="Obmolova G."/>
            <person name="Oldham M."/>
            <person name="Chang S.H."/>
            <person name="Ruiz T."/>
            <person name="Radermacher M."/>
            <person name="Kopperschlager G."/>
            <person name="Rypniewski W."/>
        </authorList>
    </citation>
    <scope>X-RAY CRYSTALLOGRAPHY (2.9 ANGSTROMS) OF 201-987 IN COMPLEX WITH SUBSTRATE FRUCTOSE 6-PHOSPHATE AND FRUCTOSE 2,6-BISPHOSPHATE; ALLOSTERIC ACTIVATOR</scope>
</reference>
<organism>
    <name type="scientific">Saccharomyces cerevisiae (strain ATCC 204508 / S288c)</name>
    <name type="common">Baker's yeast</name>
    <dbReference type="NCBI Taxonomy" id="559292"/>
    <lineage>
        <taxon>Eukaryota</taxon>
        <taxon>Fungi</taxon>
        <taxon>Dikarya</taxon>
        <taxon>Ascomycota</taxon>
        <taxon>Saccharomycotina</taxon>
        <taxon>Saccharomycetes</taxon>
        <taxon>Saccharomycetales</taxon>
        <taxon>Saccharomycetaceae</taxon>
        <taxon>Saccharomyces</taxon>
    </lineage>
</organism>
<evidence type="ECO:0000250" key="1">
    <source>
        <dbReference type="UniProtKB" id="P0A796"/>
    </source>
</evidence>
<evidence type="ECO:0000255" key="2">
    <source>
        <dbReference type="HAMAP-Rule" id="MF_03184"/>
    </source>
</evidence>
<evidence type="ECO:0000269" key="3">
    <source>
    </source>
</evidence>
<evidence type="ECO:0000269" key="4">
    <source>
    </source>
</evidence>
<evidence type="ECO:0000269" key="5">
    <source>
    </source>
</evidence>
<evidence type="ECO:0000269" key="6">
    <source>
    </source>
</evidence>
<evidence type="ECO:0000269" key="7">
    <source>
    </source>
</evidence>
<evidence type="ECO:0000269" key="8">
    <source>
    </source>
</evidence>
<evidence type="ECO:0000269" key="9">
    <source>
    </source>
</evidence>
<evidence type="ECO:0000269" key="10">
    <source>
    </source>
</evidence>
<evidence type="ECO:0000269" key="11">
    <source>
    </source>
</evidence>
<evidence type="ECO:0000269" key="12">
    <source>
    </source>
</evidence>
<evidence type="ECO:0000269" key="13">
    <source>
    </source>
</evidence>
<evidence type="ECO:0000269" key="14">
    <source>
    </source>
</evidence>
<evidence type="ECO:0000269" key="15">
    <source>
    </source>
</evidence>
<evidence type="ECO:0000269" key="16">
    <source>
    </source>
</evidence>
<evidence type="ECO:0000269" key="17">
    <source>
    </source>
</evidence>
<evidence type="ECO:0000269" key="18">
    <source>
    </source>
</evidence>
<evidence type="ECO:0000305" key="19">
    <source>
    </source>
</evidence>
<evidence type="ECO:0007744" key="20">
    <source>
    </source>
</evidence>
<evidence type="ECO:0007744" key="21">
    <source>
    </source>
</evidence>
<evidence type="ECO:0007744" key="22">
    <source>
    </source>
</evidence>
<evidence type="ECO:0007744" key="23">
    <source>
    </source>
</evidence>
<evidence type="ECO:0007829" key="24">
    <source>
        <dbReference type="PDB" id="3O8O"/>
    </source>
</evidence>
<accession>P16861</accession>
<accession>D6VV20</accession>
<proteinExistence type="evidence at protein level"/>
<gene>
    <name type="primary">PFK1</name>
    <name type="ordered locus">YGR240C</name>
    <name type="ORF">G8599</name>
</gene>
<feature type="chain" id="PRO_0000112045" description="ATP-dependent 6-phosphofructokinase subunit alpha">
    <location>
        <begin position="1"/>
        <end position="987"/>
    </location>
</feature>
<feature type="region of interest" description="N-terminal catalytic PFK domain 1" evidence="2 19">
    <location>
        <begin position="1"/>
        <end position="580"/>
    </location>
</feature>
<feature type="region of interest" description="Interdomain linker" evidence="2 19">
    <location>
        <begin position="581"/>
        <end position="594"/>
    </location>
</feature>
<feature type="region of interest" description="C-terminal regulatory PFK domain 2" evidence="2 19">
    <location>
        <begin position="595"/>
        <end position="987"/>
    </location>
</feature>
<feature type="active site" description="Proton acceptor" evidence="1 2">
    <location>
        <position position="356"/>
    </location>
</feature>
<feature type="binding site" evidence="1 2">
    <location>
        <position position="215"/>
    </location>
    <ligand>
        <name>ATP</name>
        <dbReference type="ChEBI" id="CHEBI:30616"/>
    </ligand>
</feature>
<feature type="binding site" evidence="1 2">
    <location>
        <begin position="278"/>
        <end position="279"/>
    </location>
    <ligand>
        <name>ATP</name>
        <dbReference type="ChEBI" id="CHEBI:30616"/>
    </ligand>
</feature>
<feature type="binding site" evidence="1 2">
    <location>
        <begin position="308"/>
        <end position="311"/>
    </location>
    <ligand>
        <name>ATP</name>
        <dbReference type="ChEBI" id="CHEBI:30616"/>
    </ligand>
</feature>
<feature type="binding site" evidence="1 2">
    <location>
        <position position="309"/>
    </location>
    <ligand>
        <name>Mg(2+)</name>
        <dbReference type="ChEBI" id="CHEBI:18420"/>
        <note>catalytic</note>
    </ligand>
</feature>
<feature type="binding site" evidence="2 10">
    <location>
        <begin position="354"/>
        <end position="356"/>
    </location>
    <ligand>
        <name>beta-D-fructose 6-phosphate</name>
        <dbReference type="ChEBI" id="CHEBI:57634"/>
        <label>1</label>
        <note>ligand shared with subunit beta</note>
    </ligand>
</feature>
<feature type="binding site" evidence="10">
    <location>
        <position position="391"/>
    </location>
    <ligand>
        <name>beta-D-fructose 6-phosphate</name>
        <dbReference type="ChEBI" id="CHEBI:57634"/>
        <label>2</label>
        <note>ligand shared with subunit beta</note>
    </ligand>
</feature>
<feature type="binding site" evidence="2 10">
    <location>
        <begin position="398"/>
        <end position="400"/>
    </location>
    <ligand>
        <name>beta-D-fructose 6-phosphate</name>
        <dbReference type="ChEBI" id="CHEBI:57634"/>
        <label>1</label>
        <note>ligand shared with subunit beta</note>
    </ligand>
</feature>
<feature type="binding site" evidence="10">
    <location>
        <position position="455"/>
    </location>
    <ligand>
        <name>beta-D-fructose 6-phosphate</name>
        <dbReference type="ChEBI" id="CHEBI:57634"/>
        <label>1</label>
        <note>ligand shared with subunit beta</note>
    </ligand>
</feature>
<feature type="binding site" evidence="10">
    <location>
        <position position="482"/>
    </location>
    <ligand>
        <name>beta-D-fructose 6-phosphate</name>
        <dbReference type="ChEBI" id="CHEBI:57634"/>
        <label>2</label>
        <note>ligand shared with subunit beta</note>
    </ligand>
</feature>
<feature type="binding site" evidence="2 10">
    <location>
        <begin position="488"/>
        <end position="491"/>
    </location>
    <ligand>
        <name>beta-D-fructose 6-phosphate</name>
        <dbReference type="ChEBI" id="CHEBI:57634"/>
        <label>1</label>
        <note>ligand shared with subunit beta</note>
    </ligand>
</feature>
<feature type="binding site" evidence="2 10">
    <location>
        <position position="665"/>
    </location>
    <ligand>
        <name>beta-D-fructose 2,6-bisphosphate</name>
        <dbReference type="ChEBI" id="CHEBI:58579"/>
        <label>1</label>
        <note>allosteric activator; ligand shared with subunit beta</note>
    </ligand>
</feature>
<feature type="binding site" evidence="2 10">
    <location>
        <begin position="722"/>
        <end position="726"/>
    </location>
    <ligand>
        <name>beta-D-fructose 2,6-bisphosphate</name>
        <dbReference type="ChEBI" id="CHEBI:58579"/>
        <label>1</label>
        <note>allosteric activator; ligand shared with subunit beta</note>
    </ligand>
</feature>
<feature type="binding site" evidence="2 10">
    <location>
        <position position="760"/>
    </location>
    <ligand>
        <name>beta-D-fructose 2,6-bisphosphate</name>
        <dbReference type="ChEBI" id="CHEBI:58579"/>
        <label>2</label>
        <note>allosteric activator; ligand shared with subunit beta</note>
    </ligand>
</feature>
<feature type="binding site" evidence="2 10">
    <location>
        <begin position="767"/>
        <end position="769"/>
    </location>
    <ligand>
        <name>beta-D-fructose 2,6-bisphosphate</name>
        <dbReference type="ChEBI" id="CHEBI:58579"/>
        <label>1</label>
        <note>allosteric activator; ligand shared with subunit beta</note>
    </ligand>
</feature>
<feature type="binding site" evidence="2 10">
    <location>
        <position position="827"/>
    </location>
    <ligand>
        <name>beta-D-fructose 2,6-bisphosphate</name>
        <dbReference type="ChEBI" id="CHEBI:58579"/>
        <label>1</label>
        <note>allosteric activator; ligand shared with subunit beta</note>
    </ligand>
</feature>
<feature type="binding site" evidence="2 10">
    <location>
        <position position="853"/>
    </location>
    <ligand>
        <name>beta-D-fructose 2,6-bisphosphate</name>
        <dbReference type="ChEBI" id="CHEBI:58579"/>
        <label>2</label>
        <note>allosteric activator; ligand shared with subunit beta</note>
    </ligand>
</feature>
<feature type="binding site" evidence="2 10">
    <location>
        <begin position="859"/>
        <end position="862"/>
    </location>
    <ligand>
        <name>beta-D-fructose 2,6-bisphosphate</name>
        <dbReference type="ChEBI" id="CHEBI:58579"/>
        <label>1</label>
        <note>allosteric activator; ligand shared with subunit beta</note>
    </ligand>
</feature>
<feature type="binding site" evidence="2 10">
    <location>
        <position position="952"/>
    </location>
    <ligand>
        <name>beta-D-fructose 2,6-bisphosphate</name>
        <dbReference type="ChEBI" id="CHEBI:58579"/>
        <label>1</label>
        <note>allosteric activator; ligand shared with subunit beta</note>
    </ligand>
</feature>
<feature type="modified residue" description="Phosphoserine" evidence="21">
    <location>
        <position position="3"/>
    </location>
</feature>
<feature type="modified residue" description="Phosphoserine" evidence="22">
    <location>
        <position position="166"/>
    </location>
</feature>
<feature type="modified residue" description="Phosphoserine" evidence="20 22">
    <location>
        <position position="179"/>
    </location>
</feature>
<feature type="modified residue" description="Phosphoserine" evidence="20 21 22">
    <location>
        <position position="185"/>
    </location>
</feature>
<feature type="modified residue" description="Phosphoserine" evidence="22">
    <location>
        <position position="189"/>
    </location>
</feature>
<feature type="modified residue" description="Phosphoserine" evidence="20 21 22">
    <location>
        <position position="192"/>
    </location>
</feature>
<feature type="modified residue" description="Phosphoserine" evidence="22">
    <location>
        <position position="217"/>
    </location>
</feature>
<feature type="modified residue" description="Phosphothreonine" evidence="22">
    <location>
        <position position="450"/>
    </location>
</feature>
<feature type="cross-link" description="Glycyl lysine isopeptide (Lys-Gly) (interchain with G-Cter in ubiquitin)" evidence="23">
    <location>
        <position position="89"/>
    </location>
</feature>
<feature type="cross-link" description="Glycyl lysine isopeptide (Lys-Gly) (interchain with G-Cter in ubiquitin)" evidence="23">
    <location>
        <position position="625"/>
    </location>
</feature>
<feature type="mutagenesis site" description="Reduces maximal activity of the holoenzyme by 50%. Completely abolishes catalytic activity; when associated with 'S-348' in subunit beta." evidence="17">
    <original>D</original>
    <variation>T</variation>
    <location>
        <position position="309"/>
    </location>
</feature>
<feature type="mutagenesis site" description="Reduces maximal activity of the holoenzyme by 50%. Completely abolishes catalytic activity; when associated with 'S-348' in subunit beta." evidence="17">
    <original>D</original>
    <variation>S</variation>
    <location>
        <position position="356"/>
    </location>
</feature>
<feature type="mutagenesis site" description="Reduces maximal activity of the holoenzyme by less than 25%." evidence="17">
    <original>R</original>
    <variation>S</variation>
    <location>
        <position position="447"/>
    </location>
</feature>
<feature type="mutagenesis site" description="Increases the KM for fructose 6-phosphate 20 fold." evidence="17">
    <original>H</original>
    <variation>S</variation>
    <location>
        <position position="488"/>
    </location>
</feature>
<feature type="mutagenesis site" description="Abolishes sensitivity of the holoenzyme to fructose 2,6-bisphosphate activation; when associated with 'D-718' in subunit beta." evidence="18">
    <original>S</original>
    <variation>D</variation>
    <location>
        <position position="724"/>
    </location>
</feature>
<feature type="mutagenesis site" description="Drastically reduces sensitivity of the holoenzyme to ATP inhibition." evidence="3">
    <original>P</original>
    <variation>L</variation>
    <location>
        <position position="728"/>
    </location>
</feature>
<feature type="mutagenesis site" description="Reduces sensitivity of the holoenzyme to fructose 2,6-bisphosphate activation; when associated with 'S-853' in subunit beta." evidence="18">
    <original>H</original>
    <variation>S</variation>
    <location>
        <position position="859"/>
    </location>
</feature>
<feature type="strand" evidence="24">
    <location>
        <begin position="207"/>
        <end position="215"/>
    </location>
</feature>
<feature type="helix" evidence="24">
    <location>
        <begin position="220"/>
        <end position="233"/>
    </location>
</feature>
<feature type="strand" evidence="24">
    <location>
        <begin position="237"/>
        <end position="241"/>
    </location>
</feature>
<feature type="helix" evidence="24">
    <location>
        <begin position="244"/>
        <end position="250"/>
    </location>
</feature>
<feature type="strand" evidence="24">
    <location>
        <begin position="254"/>
        <end position="257"/>
    </location>
</feature>
<feature type="helix" evidence="24">
    <location>
        <begin position="260"/>
        <end position="263"/>
    </location>
</feature>
<feature type="helix" evidence="24">
    <location>
        <begin position="266"/>
        <end position="268"/>
    </location>
</feature>
<feature type="helix" evidence="24">
    <location>
        <begin position="281"/>
        <end position="283"/>
    </location>
</feature>
<feature type="helix" evidence="24">
    <location>
        <begin position="285"/>
        <end position="297"/>
    </location>
</feature>
<feature type="strand" evidence="24">
    <location>
        <begin position="300"/>
        <end position="307"/>
    </location>
</feature>
<feature type="helix" evidence="24">
    <location>
        <begin position="309"/>
        <end position="319"/>
    </location>
</feature>
<feature type="helix" evidence="24">
    <location>
        <begin position="322"/>
        <end position="330"/>
    </location>
</feature>
<feature type="strand" evidence="24">
    <location>
        <begin position="331"/>
        <end position="334"/>
    </location>
</feature>
<feature type="turn" evidence="24">
    <location>
        <begin position="337"/>
        <end position="343"/>
    </location>
</feature>
<feature type="strand" evidence="24">
    <location>
        <begin position="347"/>
        <end position="356"/>
    </location>
</feature>
<feature type="helix" evidence="24">
    <location>
        <begin position="368"/>
        <end position="388"/>
    </location>
</feature>
<feature type="strand" evidence="24">
    <location>
        <begin position="392"/>
        <end position="397"/>
    </location>
</feature>
<feature type="helix" evidence="24">
    <location>
        <begin position="404"/>
        <end position="412"/>
    </location>
</feature>
<feature type="strand" evidence="24">
    <location>
        <begin position="416"/>
        <end position="419"/>
    </location>
</feature>
<feature type="helix" evidence="24">
    <location>
        <begin position="421"/>
        <end position="423"/>
    </location>
</feature>
<feature type="turn" evidence="24">
    <location>
        <begin position="427"/>
        <end position="429"/>
    </location>
</feature>
<feature type="helix" evidence="24">
    <location>
        <begin position="430"/>
        <end position="443"/>
    </location>
</feature>
<feature type="strand" evidence="24">
    <location>
        <begin position="449"/>
        <end position="454"/>
    </location>
</feature>
<feature type="helix" evidence="24">
    <location>
        <begin position="467"/>
        <end position="477"/>
    </location>
</feature>
<feature type="strand" evidence="24">
    <location>
        <begin position="481"/>
        <end position="485"/>
    </location>
</feature>
<feature type="helix" evidence="24">
    <location>
        <begin position="487"/>
        <end position="490"/>
    </location>
</feature>
<feature type="helix" evidence="24">
    <location>
        <begin position="497"/>
        <end position="515"/>
    </location>
</feature>
<feature type="strand" evidence="24">
    <location>
        <begin position="524"/>
        <end position="537"/>
    </location>
</feature>
<feature type="helix" evidence="24">
    <location>
        <begin position="538"/>
        <end position="553"/>
    </location>
</feature>
<feature type="helix" evidence="24">
    <location>
        <begin position="557"/>
        <end position="562"/>
    </location>
</feature>
<feature type="helix" evidence="24">
    <location>
        <begin position="568"/>
        <end position="579"/>
    </location>
</feature>
<feature type="strand" evidence="24">
    <location>
        <begin position="595"/>
        <end position="603"/>
    </location>
</feature>
<feature type="helix" evidence="24">
    <location>
        <begin position="608"/>
        <end position="622"/>
    </location>
</feature>
<feature type="strand" evidence="24">
    <location>
        <begin position="625"/>
        <end position="629"/>
    </location>
</feature>
<feature type="helix" evidence="24">
    <location>
        <begin position="632"/>
        <end position="639"/>
    </location>
</feature>
<feature type="strand" evidence="24">
    <location>
        <begin position="642"/>
        <end position="644"/>
    </location>
</feature>
<feature type="turn" evidence="24">
    <location>
        <begin position="647"/>
        <end position="652"/>
    </location>
</feature>
<feature type="helix" evidence="24">
    <location>
        <begin position="653"/>
        <end position="655"/>
    </location>
</feature>
<feature type="helix" evidence="24">
    <location>
        <begin position="668"/>
        <end position="670"/>
    </location>
</feature>
<feature type="helix" evidence="24">
    <location>
        <begin position="672"/>
        <end position="681"/>
    </location>
</feature>
<feature type="strand" evidence="24">
    <location>
        <begin position="685"/>
        <end position="692"/>
    </location>
</feature>
<feature type="helix" evidence="24">
    <location>
        <begin position="693"/>
        <end position="705"/>
    </location>
</feature>
<feature type="turn" evidence="24">
    <location>
        <begin position="706"/>
        <end position="708"/>
    </location>
</feature>
<feature type="helix" evidence="24">
    <location>
        <begin position="710"/>
        <end position="713"/>
    </location>
</feature>
<feature type="strand" evidence="24">
    <location>
        <begin position="716"/>
        <end position="721"/>
    </location>
</feature>
<feature type="helix" evidence="24">
    <location>
        <begin position="736"/>
        <end position="757"/>
    </location>
</feature>
<feature type="strand" evidence="24">
    <location>
        <begin position="758"/>
        <end position="766"/>
    </location>
</feature>
<feature type="helix" evidence="24">
    <location>
        <begin position="773"/>
        <end position="780"/>
    </location>
</feature>
<feature type="turn" evidence="24">
    <location>
        <begin position="781"/>
        <end position="783"/>
    </location>
</feature>
<feature type="strand" evidence="24">
    <location>
        <begin position="785"/>
        <end position="788"/>
    </location>
</feature>
<feature type="strand" evidence="24">
    <location>
        <begin position="790"/>
        <end position="792"/>
    </location>
</feature>
<feature type="helix" evidence="24">
    <location>
        <begin position="796"/>
        <end position="812"/>
    </location>
</feature>
<feature type="strand" evidence="24">
    <location>
        <begin position="821"/>
        <end position="826"/>
    </location>
</feature>
<feature type="strand" evidence="24">
    <location>
        <begin position="831"/>
        <end position="833"/>
    </location>
</feature>
<feature type="helix" evidence="24">
    <location>
        <begin position="835"/>
        <end position="846"/>
    </location>
</feature>
<feature type="strand" evidence="24">
    <location>
        <begin position="849"/>
        <end position="856"/>
    </location>
</feature>
<feature type="helix" evidence="24">
    <location>
        <begin position="858"/>
        <end position="862"/>
    </location>
</feature>
<feature type="helix" evidence="24">
    <location>
        <begin position="868"/>
        <end position="890"/>
    </location>
</feature>
<feature type="helix" evidence="24">
    <location>
        <begin position="921"/>
        <end position="923"/>
    </location>
</feature>
<feature type="strand" evidence="24">
    <location>
        <begin position="924"/>
        <end position="930"/>
    </location>
</feature>
<feature type="strand" evidence="24">
    <location>
        <begin position="933"/>
        <end position="938"/>
    </location>
</feature>
<feature type="helix" evidence="24">
    <location>
        <begin position="939"/>
        <end position="942"/>
    </location>
</feature>
<feature type="turn" evidence="24">
    <location>
        <begin position="948"/>
        <end position="951"/>
    </location>
</feature>
<feature type="strand" evidence="24">
    <location>
        <begin position="953"/>
        <end position="955"/>
    </location>
</feature>
<feature type="helix" evidence="24">
    <location>
        <begin position="960"/>
        <end position="969"/>
    </location>
</feature>
<feature type="helix" evidence="24">
    <location>
        <begin position="972"/>
        <end position="978"/>
    </location>
</feature>
<protein>
    <recommendedName>
        <fullName evidence="2">ATP-dependent 6-phosphofructokinase subunit alpha</fullName>
        <ecNumber evidence="2">2.7.1.11</ecNumber>
    </recommendedName>
    <alternativeName>
        <fullName evidence="2">ATP-dependent 6-phosphofructokinase</fullName>
        <shortName evidence="2">ATP-PFK</shortName>
        <shortName evidence="2">Phosphofructokinase 1</shortName>
    </alternativeName>
    <alternativeName>
        <fullName evidence="2">Phosphohexokinase</fullName>
    </alternativeName>
</protein>
<keyword id="KW-0002">3D-structure</keyword>
<keyword id="KW-0021">Allosteric enzyme</keyword>
<keyword id="KW-0067">ATP-binding</keyword>
<keyword id="KW-0963">Cytoplasm</keyword>
<keyword id="KW-0903">Direct protein sequencing</keyword>
<keyword id="KW-0324">Glycolysis</keyword>
<keyword id="KW-1017">Isopeptide bond</keyword>
<keyword id="KW-0418">Kinase</keyword>
<keyword id="KW-0460">Magnesium</keyword>
<keyword id="KW-0472">Membrane</keyword>
<keyword id="KW-0479">Metal-binding</keyword>
<keyword id="KW-0496">Mitochondrion</keyword>
<keyword id="KW-1000">Mitochondrion outer membrane</keyword>
<keyword id="KW-0547">Nucleotide-binding</keyword>
<keyword id="KW-0597">Phosphoprotein</keyword>
<keyword id="KW-1185">Reference proteome</keyword>
<keyword id="KW-0808">Transferase</keyword>
<keyword id="KW-0832">Ubl conjugation</keyword>